<proteinExistence type="inferred from homology"/>
<reference key="1">
    <citation type="journal article" date="2003" name="Nucleic Acids Res.">
        <title>The complete genome sequence and analysis of Corynebacterium diphtheriae NCTC13129.</title>
        <authorList>
            <person name="Cerdeno-Tarraga A.-M."/>
            <person name="Efstratiou A."/>
            <person name="Dover L.G."/>
            <person name="Holden M.T.G."/>
            <person name="Pallen M.J."/>
            <person name="Bentley S.D."/>
            <person name="Besra G.S."/>
            <person name="Churcher C.M."/>
            <person name="James K.D."/>
            <person name="De Zoysa A."/>
            <person name="Chillingworth T."/>
            <person name="Cronin A."/>
            <person name="Dowd L."/>
            <person name="Feltwell T."/>
            <person name="Hamlin N."/>
            <person name="Holroyd S."/>
            <person name="Jagels K."/>
            <person name="Moule S."/>
            <person name="Quail M.A."/>
            <person name="Rabbinowitsch E."/>
            <person name="Rutherford K.M."/>
            <person name="Thomson N.R."/>
            <person name="Unwin L."/>
            <person name="Whitehead S."/>
            <person name="Barrell B.G."/>
            <person name="Parkhill J."/>
        </authorList>
    </citation>
    <scope>NUCLEOTIDE SEQUENCE [LARGE SCALE GENOMIC DNA]</scope>
    <source>
        <strain>ATCC 700971 / NCTC 13129 / Biotype gravis</strain>
    </source>
</reference>
<feature type="chain" id="PRO_1000016111" description="Aspartyl/glutamyl-tRNA(Asn/Gln) amidotransferase subunit C">
    <location>
        <begin position="1"/>
        <end position="99"/>
    </location>
</feature>
<organism>
    <name type="scientific">Corynebacterium diphtheriae (strain ATCC 700971 / NCTC 13129 / Biotype gravis)</name>
    <dbReference type="NCBI Taxonomy" id="257309"/>
    <lineage>
        <taxon>Bacteria</taxon>
        <taxon>Bacillati</taxon>
        <taxon>Actinomycetota</taxon>
        <taxon>Actinomycetes</taxon>
        <taxon>Mycobacteriales</taxon>
        <taxon>Corynebacteriaceae</taxon>
        <taxon>Corynebacterium</taxon>
    </lineage>
</organism>
<protein>
    <recommendedName>
        <fullName evidence="1">Aspartyl/glutamyl-tRNA(Asn/Gln) amidotransferase subunit C</fullName>
        <shortName evidence="1">Asp/Glu-ADT subunit C</shortName>
        <ecNumber evidence="1">6.3.5.-</ecNumber>
    </recommendedName>
</protein>
<dbReference type="EC" id="6.3.5.-" evidence="1"/>
<dbReference type="EMBL" id="BX248357">
    <property type="protein sequence ID" value="CAE49602.1"/>
    <property type="molecule type" value="Genomic_DNA"/>
</dbReference>
<dbReference type="RefSeq" id="WP_003851146.1">
    <property type="nucleotide sequence ID" value="NC_002935.2"/>
</dbReference>
<dbReference type="SMR" id="Q6NHQ2"/>
<dbReference type="STRING" id="257309.DIP1079"/>
<dbReference type="GeneID" id="29422455"/>
<dbReference type="KEGG" id="cdi:DIP1079"/>
<dbReference type="HOGENOM" id="CLU_105899_1_0_11"/>
<dbReference type="Proteomes" id="UP000002198">
    <property type="component" value="Chromosome"/>
</dbReference>
<dbReference type="GO" id="GO:0050566">
    <property type="term" value="F:asparaginyl-tRNA synthase (glutamine-hydrolyzing) activity"/>
    <property type="evidence" value="ECO:0007669"/>
    <property type="project" value="RHEA"/>
</dbReference>
<dbReference type="GO" id="GO:0005524">
    <property type="term" value="F:ATP binding"/>
    <property type="evidence" value="ECO:0007669"/>
    <property type="project" value="UniProtKB-KW"/>
</dbReference>
<dbReference type="GO" id="GO:0050567">
    <property type="term" value="F:glutaminyl-tRNA synthase (glutamine-hydrolyzing) activity"/>
    <property type="evidence" value="ECO:0007669"/>
    <property type="project" value="UniProtKB-UniRule"/>
</dbReference>
<dbReference type="GO" id="GO:0070681">
    <property type="term" value="P:glutaminyl-tRNAGln biosynthesis via transamidation"/>
    <property type="evidence" value="ECO:0007669"/>
    <property type="project" value="TreeGrafter"/>
</dbReference>
<dbReference type="GO" id="GO:0006450">
    <property type="term" value="P:regulation of translational fidelity"/>
    <property type="evidence" value="ECO:0007669"/>
    <property type="project" value="InterPro"/>
</dbReference>
<dbReference type="GO" id="GO:0006412">
    <property type="term" value="P:translation"/>
    <property type="evidence" value="ECO:0007669"/>
    <property type="project" value="UniProtKB-UniRule"/>
</dbReference>
<dbReference type="Gene3D" id="1.10.20.60">
    <property type="entry name" value="Glu-tRNAGln amidotransferase C subunit, N-terminal domain"/>
    <property type="match status" value="1"/>
</dbReference>
<dbReference type="HAMAP" id="MF_00122">
    <property type="entry name" value="GatC"/>
    <property type="match status" value="1"/>
</dbReference>
<dbReference type="InterPro" id="IPR036113">
    <property type="entry name" value="Asp/Glu-ADT_sf_sub_c"/>
</dbReference>
<dbReference type="InterPro" id="IPR003837">
    <property type="entry name" value="GatC"/>
</dbReference>
<dbReference type="NCBIfam" id="TIGR00135">
    <property type="entry name" value="gatC"/>
    <property type="match status" value="1"/>
</dbReference>
<dbReference type="PANTHER" id="PTHR15004">
    <property type="entry name" value="GLUTAMYL-TRNA(GLN) AMIDOTRANSFERASE SUBUNIT C, MITOCHONDRIAL"/>
    <property type="match status" value="1"/>
</dbReference>
<dbReference type="PANTHER" id="PTHR15004:SF0">
    <property type="entry name" value="GLUTAMYL-TRNA(GLN) AMIDOTRANSFERASE SUBUNIT C, MITOCHONDRIAL"/>
    <property type="match status" value="1"/>
</dbReference>
<dbReference type="Pfam" id="PF02686">
    <property type="entry name" value="GatC"/>
    <property type="match status" value="1"/>
</dbReference>
<dbReference type="SUPFAM" id="SSF141000">
    <property type="entry name" value="Glu-tRNAGln amidotransferase C subunit"/>
    <property type="match status" value="1"/>
</dbReference>
<comment type="function">
    <text evidence="1">Allows the formation of correctly charged Asn-tRNA(Asn) or Gln-tRNA(Gln) through the transamidation of misacylated Asp-tRNA(Asn) or Glu-tRNA(Gln) in organisms which lack either or both of asparaginyl-tRNA or glutaminyl-tRNA synthetases. The reaction takes place in the presence of glutamine and ATP through an activated phospho-Asp-tRNA(Asn) or phospho-Glu-tRNA(Gln).</text>
</comment>
<comment type="catalytic activity">
    <reaction evidence="1">
        <text>L-glutamyl-tRNA(Gln) + L-glutamine + ATP + H2O = L-glutaminyl-tRNA(Gln) + L-glutamate + ADP + phosphate + H(+)</text>
        <dbReference type="Rhea" id="RHEA:17521"/>
        <dbReference type="Rhea" id="RHEA-COMP:9681"/>
        <dbReference type="Rhea" id="RHEA-COMP:9684"/>
        <dbReference type="ChEBI" id="CHEBI:15377"/>
        <dbReference type="ChEBI" id="CHEBI:15378"/>
        <dbReference type="ChEBI" id="CHEBI:29985"/>
        <dbReference type="ChEBI" id="CHEBI:30616"/>
        <dbReference type="ChEBI" id="CHEBI:43474"/>
        <dbReference type="ChEBI" id="CHEBI:58359"/>
        <dbReference type="ChEBI" id="CHEBI:78520"/>
        <dbReference type="ChEBI" id="CHEBI:78521"/>
        <dbReference type="ChEBI" id="CHEBI:456216"/>
    </reaction>
</comment>
<comment type="catalytic activity">
    <reaction evidence="1">
        <text>L-aspartyl-tRNA(Asn) + L-glutamine + ATP + H2O = L-asparaginyl-tRNA(Asn) + L-glutamate + ADP + phosphate + 2 H(+)</text>
        <dbReference type="Rhea" id="RHEA:14513"/>
        <dbReference type="Rhea" id="RHEA-COMP:9674"/>
        <dbReference type="Rhea" id="RHEA-COMP:9677"/>
        <dbReference type="ChEBI" id="CHEBI:15377"/>
        <dbReference type="ChEBI" id="CHEBI:15378"/>
        <dbReference type="ChEBI" id="CHEBI:29985"/>
        <dbReference type="ChEBI" id="CHEBI:30616"/>
        <dbReference type="ChEBI" id="CHEBI:43474"/>
        <dbReference type="ChEBI" id="CHEBI:58359"/>
        <dbReference type="ChEBI" id="CHEBI:78515"/>
        <dbReference type="ChEBI" id="CHEBI:78516"/>
        <dbReference type="ChEBI" id="CHEBI:456216"/>
    </reaction>
</comment>
<comment type="subunit">
    <text evidence="1">Heterotrimer of A, B and C subunits.</text>
</comment>
<comment type="similarity">
    <text evidence="1">Belongs to the GatC family.</text>
</comment>
<keyword id="KW-0067">ATP-binding</keyword>
<keyword id="KW-0436">Ligase</keyword>
<keyword id="KW-0547">Nucleotide-binding</keyword>
<keyword id="KW-0648">Protein biosynthesis</keyword>
<keyword id="KW-1185">Reference proteome</keyword>
<accession>Q6NHQ2</accession>
<evidence type="ECO:0000255" key="1">
    <source>
        <dbReference type="HAMAP-Rule" id="MF_00122"/>
    </source>
</evidence>
<sequence>MPEISRDEVAHLAKLSRLALTDEELDRFAEQIDGIIGNVSAVQQVAAEGVEPMSHPHSIKTTMREDVVEQILTPEQALDQAPAVDQQRFVVPQILGEQD</sequence>
<gene>
    <name evidence="1" type="primary">gatC</name>
    <name type="ordered locus">DIP1079</name>
</gene>
<name>GATC_CORDI</name>